<name>STR11_ARATH</name>
<proteinExistence type="evidence at transcript level"/>
<feature type="transit peptide" description="Chloroplast" evidence="1">
    <location>
        <begin position="1"/>
        <end position="56"/>
    </location>
</feature>
<feature type="chain" id="PRO_0000416533" description="Rhodanese-like domain-containing protein 11, chloroplastic">
    <location>
        <begin position="57"/>
        <end position="292"/>
    </location>
</feature>
<feature type="domain" description="Rhodanese" evidence="2">
    <location>
        <begin position="101"/>
        <end position="224"/>
    </location>
</feature>
<feature type="active site" description="Cysteine persulfide intermediate" evidence="2">
    <location>
        <position position="184"/>
    </location>
</feature>
<accession>Q0WWT7</accession>
<accession>Q501G8</accession>
<accession>Q9SB69</accession>
<reference key="1">
    <citation type="journal article" date="1999" name="Nature">
        <title>Sequence and analysis of chromosome 4 of the plant Arabidopsis thaliana.</title>
        <authorList>
            <person name="Mayer K.F.X."/>
            <person name="Schueller C."/>
            <person name="Wambutt R."/>
            <person name="Murphy G."/>
            <person name="Volckaert G."/>
            <person name="Pohl T."/>
            <person name="Duesterhoeft A."/>
            <person name="Stiekema W."/>
            <person name="Entian K.-D."/>
            <person name="Terryn N."/>
            <person name="Harris B."/>
            <person name="Ansorge W."/>
            <person name="Brandt P."/>
            <person name="Grivell L.A."/>
            <person name="Rieger M."/>
            <person name="Weichselgartner M."/>
            <person name="de Simone V."/>
            <person name="Obermaier B."/>
            <person name="Mache R."/>
            <person name="Mueller M."/>
            <person name="Kreis M."/>
            <person name="Delseny M."/>
            <person name="Puigdomenech P."/>
            <person name="Watson M."/>
            <person name="Schmidtheini T."/>
            <person name="Reichert B."/>
            <person name="Portetelle D."/>
            <person name="Perez-Alonso M."/>
            <person name="Boutry M."/>
            <person name="Bancroft I."/>
            <person name="Vos P."/>
            <person name="Hoheisel J."/>
            <person name="Zimmermann W."/>
            <person name="Wedler H."/>
            <person name="Ridley P."/>
            <person name="Langham S.-A."/>
            <person name="McCullagh B."/>
            <person name="Bilham L."/>
            <person name="Robben J."/>
            <person name="van der Schueren J."/>
            <person name="Grymonprez B."/>
            <person name="Chuang Y.-J."/>
            <person name="Vandenbussche F."/>
            <person name="Braeken M."/>
            <person name="Weltjens I."/>
            <person name="Voet M."/>
            <person name="Bastiaens I."/>
            <person name="Aert R."/>
            <person name="Defoor E."/>
            <person name="Weitzenegger T."/>
            <person name="Bothe G."/>
            <person name="Ramsperger U."/>
            <person name="Hilbert H."/>
            <person name="Braun M."/>
            <person name="Holzer E."/>
            <person name="Brandt A."/>
            <person name="Peters S."/>
            <person name="van Staveren M."/>
            <person name="Dirkse W."/>
            <person name="Mooijman P."/>
            <person name="Klein Lankhorst R."/>
            <person name="Rose M."/>
            <person name="Hauf J."/>
            <person name="Koetter P."/>
            <person name="Berneiser S."/>
            <person name="Hempel S."/>
            <person name="Feldpausch M."/>
            <person name="Lamberth S."/>
            <person name="Van den Daele H."/>
            <person name="De Keyser A."/>
            <person name="Buysshaert C."/>
            <person name="Gielen J."/>
            <person name="Villarroel R."/>
            <person name="De Clercq R."/>
            <person name="van Montagu M."/>
            <person name="Rogers J."/>
            <person name="Cronin A."/>
            <person name="Quail M.A."/>
            <person name="Bray-Allen S."/>
            <person name="Clark L."/>
            <person name="Doggett J."/>
            <person name="Hall S."/>
            <person name="Kay M."/>
            <person name="Lennard N."/>
            <person name="McLay K."/>
            <person name="Mayes R."/>
            <person name="Pettett A."/>
            <person name="Rajandream M.A."/>
            <person name="Lyne M."/>
            <person name="Benes V."/>
            <person name="Rechmann S."/>
            <person name="Borkova D."/>
            <person name="Bloecker H."/>
            <person name="Scharfe M."/>
            <person name="Grimm M."/>
            <person name="Loehnert T.-H."/>
            <person name="Dose S."/>
            <person name="de Haan M."/>
            <person name="Maarse A.C."/>
            <person name="Schaefer M."/>
            <person name="Mueller-Auer S."/>
            <person name="Gabel C."/>
            <person name="Fuchs M."/>
            <person name="Fartmann B."/>
            <person name="Granderath K."/>
            <person name="Dauner D."/>
            <person name="Herzl A."/>
            <person name="Neumann S."/>
            <person name="Argiriou A."/>
            <person name="Vitale D."/>
            <person name="Liguori R."/>
            <person name="Piravandi E."/>
            <person name="Massenet O."/>
            <person name="Quigley F."/>
            <person name="Clabauld G."/>
            <person name="Muendlein A."/>
            <person name="Felber R."/>
            <person name="Schnabl S."/>
            <person name="Hiller R."/>
            <person name="Schmidt W."/>
            <person name="Lecharny A."/>
            <person name="Aubourg S."/>
            <person name="Chefdor F."/>
            <person name="Cooke R."/>
            <person name="Berger C."/>
            <person name="Monfort A."/>
            <person name="Casacuberta E."/>
            <person name="Gibbons T."/>
            <person name="Weber N."/>
            <person name="Vandenbol M."/>
            <person name="Bargues M."/>
            <person name="Terol J."/>
            <person name="Torres A."/>
            <person name="Perez-Perez A."/>
            <person name="Purnelle B."/>
            <person name="Bent E."/>
            <person name="Johnson S."/>
            <person name="Tacon D."/>
            <person name="Jesse T."/>
            <person name="Heijnen L."/>
            <person name="Schwarz S."/>
            <person name="Scholler P."/>
            <person name="Heber S."/>
            <person name="Francs P."/>
            <person name="Bielke C."/>
            <person name="Frishman D."/>
            <person name="Haase D."/>
            <person name="Lemcke K."/>
            <person name="Mewes H.-W."/>
            <person name="Stocker S."/>
            <person name="Zaccaria P."/>
            <person name="Bevan M."/>
            <person name="Wilson R.K."/>
            <person name="de la Bastide M."/>
            <person name="Habermann K."/>
            <person name="Parnell L."/>
            <person name="Dedhia N."/>
            <person name="Gnoj L."/>
            <person name="Schutz K."/>
            <person name="Huang E."/>
            <person name="Spiegel L."/>
            <person name="Sekhon M."/>
            <person name="Murray J."/>
            <person name="Sheet P."/>
            <person name="Cordes M."/>
            <person name="Abu-Threideh J."/>
            <person name="Stoneking T."/>
            <person name="Kalicki J."/>
            <person name="Graves T."/>
            <person name="Harmon G."/>
            <person name="Edwards J."/>
            <person name="Latreille P."/>
            <person name="Courtney L."/>
            <person name="Cloud J."/>
            <person name="Abbott A."/>
            <person name="Scott K."/>
            <person name="Johnson D."/>
            <person name="Minx P."/>
            <person name="Bentley D."/>
            <person name="Fulton B."/>
            <person name="Miller N."/>
            <person name="Greco T."/>
            <person name="Kemp K."/>
            <person name="Kramer J."/>
            <person name="Fulton L."/>
            <person name="Mardis E."/>
            <person name="Dante M."/>
            <person name="Pepin K."/>
            <person name="Hillier L.W."/>
            <person name="Nelson J."/>
            <person name="Spieth J."/>
            <person name="Ryan E."/>
            <person name="Andrews S."/>
            <person name="Geisel C."/>
            <person name="Layman D."/>
            <person name="Du H."/>
            <person name="Ali J."/>
            <person name="Berghoff A."/>
            <person name="Jones K."/>
            <person name="Drone K."/>
            <person name="Cotton M."/>
            <person name="Joshu C."/>
            <person name="Antonoiu B."/>
            <person name="Zidanic M."/>
            <person name="Strong C."/>
            <person name="Sun H."/>
            <person name="Lamar B."/>
            <person name="Yordan C."/>
            <person name="Ma P."/>
            <person name="Zhong J."/>
            <person name="Preston R."/>
            <person name="Vil D."/>
            <person name="Shekher M."/>
            <person name="Matero A."/>
            <person name="Shah R."/>
            <person name="Swaby I.K."/>
            <person name="O'Shaughnessy A."/>
            <person name="Rodriguez M."/>
            <person name="Hoffman J."/>
            <person name="Till S."/>
            <person name="Granat S."/>
            <person name="Shohdy N."/>
            <person name="Hasegawa A."/>
            <person name="Hameed A."/>
            <person name="Lodhi M."/>
            <person name="Johnson A."/>
            <person name="Chen E."/>
            <person name="Marra M.A."/>
            <person name="Martienssen R."/>
            <person name="McCombie W.R."/>
        </authorList>
    </citation>
    <scope>NUCLEOTIDE SEQUENCE [LARGE SCALE GENOMIC DNA]</scope>
    <source>
        <strain>cv. Columbia</strain>
    </source>
</reference>
<reference key="2">
    <citation type="journal article" date="2017" name="Plant J.">
        <title>Araport11: a complete reannotation of the Arabidopsis thaliana reference genome.</title>
        <authorList>
            <person name="Cheng C.Y."/>
            <person name="Krishnakumar V."/>
            <person name="Chan A.P."/>
            <person name="Thibaud-Nissen F."/>
            <person name="Schobel S."/>
            <person name="Town C.D."/>
        </authorList>
    </citation>
    <scope>GENOME REANNOTATION</scope>
    <source>
        <strain>cv. Columbia</strain>
    </source>
</reference>
<reference key="3">
    <citation type="submission" date="2006-07" db="EMBL/GenBank/DDBJ databases">
        <title>Large-scale analysis of RIKEN Arabidopsis full-length (RAFL) cDNAs.</title>
        <authorList>
            <person name="Totoki Y."/>
            <person name="Seki M."/>
            <person name="Ishida J."/>
            <person name="Nakajima M."/>
            <person name="Enju A."/>
            <person name="Kamiya A."/>
            <person name="Narusaka M."/>
            <person name="Shin-i T."/>
            <person name="Nakagawa M."/>
            <person name="Sakamoto N."/>
            <person name="Oishi K."/>
            <person name="Kohara Y."/>
            <person name="Kobayashi M."/>
            <person name="Toyoda A."/>
            <person name="Sakaki Y."/>
            <person name="Sakurai T."/>
            <person name="Iida K."/>
            <person name="Akiyama K."/>
            <person name="Satou M."/>
            <person name="Toyoda T."/>
            <person name="Konagaya A."/>
            <person name="Carninci P."/>
            <person name="Kawai J."/>
            <person name="Hayashizaki Y."/>
            <person name="Shinozaki K."/>
        </authorList>
    </citation>
    <scope>NUCLEOTIDE SEQUENCE [LARGE SCALE MRNA]</scope>
    <source>
        <strain>cv. Columbia</strain>
    </source>
</reference>
<reference key="4">
    <citation type="submission" date="2007-01" db="EMBL/GenBank/DDBJ databases">
        <title>Arabidopsis ORF clones.</title>
        <authorList>
            <person name="Bautista V.R."/>
            <person name="Kim C.J."/>
            <person name="Chen H."/>
            <person name="Wu S.Y."/>
            <person name="De Los Reyes C."/>
            <person name="Ecker J.R."/>
        </authorList>
    </citation>
    <scope>NUCLEOTIDE SEQUENCE [LARGE SCALE MRNA]</scope>
    <source>
        <strain>cv. Columbia</strain>
    </source>
</reference>
<reference key="5">
    <citation type="submission" date="2005-05" db="EMBL/GenBank/DDBJ databases">
        <title>Arabidopsis ORF clones.</title>
        <authorList>
            <person name="Cheuk R.F."/>
            <person name="Chen H."/>
            <person name="Kim C.J."/>
            <person name="Shinn P."/>
            <person name="Ecker J.R."/>
        </authorList>
    </citation>
    <scope>NUCLEOTIDE SEQUENCE [LARGE SCALE MRNA] OF 2-292</scope>
    <source>
        <strain>cv. Columbia</strain>
    </source>
</reference>
<reference key="6">
    <citation type="journal article" date="2007" name="Plant Physiol. Biochem.">
        <title>Differential expression of Arabidopsis sulfurtransferases under various growth conditions.</title>
        <authorList>
            <person name="Bartels A."/>
            <person name="Mock H.P."/>
            <person name="Papenbrock J."/>
        </authorList>
    </citation>
    <scope>GENE FAMILY</scope>
    <scope>NOMENCLATURE</scope>
</reference>
<evidence type="ECO:0000255" key="1"/>
<evidence type="ECO:0000255" key="2">
    <source>
        <dbReference type="PROSITE-ProRule" id="PRU00173"/>
    </source>
</evidence>
<evidence type="ECO:0000305" key="3"/>
<keyword id="KW-0150">Chloroplast</keyword>
<keyword id="KW-0934">Plastid</keyword>
<keyword id="KW-1185">Reference proteome</keyword>
<keyword id="KW-0809">Transit peptide</keyword>
<comment type="subcellular location">
    <subcellularLocation>
        <location evidence="3">Plastid</location>
        <location evidence="3">Chloroplast</location>
    </subcellularLocation>
</comment>
<comment type="sequence caution" evidence="3">
    <conflict type="erroneous initiation">
        <sequence resource="EMBL-CDS" id="AAY25411"/>
    </conflict>
    <text>Truncated N-terminus.</text>
</comment>
<comment type="sequence caution" evidence="3">
    <conflict type="erroneous gene model prediction">
        <sequence resource="EMBL-CDS" id="CAA22988"/>
    </conflict>
</comment>
<comment type="sequence caution" evidence="3">
    <conflict type="erroneous gene model prediction">
        <sequence resource="EMBL-CDS" id="CAB79385"/>
    </conflict>
</comment>
<gene>
    <name type="primary">STR11</name>
    <name type="ordered locus">At4g24750</name>
    <name type="ORF">F22K18.50</name>
</gene>
<protein>
    <recommendedName>
        <fullName>Rhodanese-like domain-containing protein 11, chloroplastic</fullName>
    </recommendedName>
    <alternativeName>
        <fullName>Sulfurtransferase 11</fullName>
        <shortName>AtStr11</shortName>
    </alternativeName>
</protein>
<dbReference type="EMBL" id="AL035356">
    <property type="protein sequence ID" value="CAA22988.1"/>
    <property type="status" value="ALT_SEQ"/>
    <property type="molecule type" value="Genomic_DNA"/>
</dbReference>
<dbReference type="EMBL" id="AL161562">
    <property type="protein sequence ID" value="CAB79385.1"/>
    <property type="status" value="ALT_SEQ"/>
    <property type="molecule type" value="Genomic_DNA"/>
</dbReference>
<dbReference type="EMBL" id="CP002687">
    <property type="protein sequence ID" value="AEE84952.1"/>
    <property type="molecule type" value="Genomic_DNA"/>
</dbReference>
<dbReference type="EMBL" id="AK226250">
    <property type="protein sequence ID" value="BAE98411.1"/>
    <property type="molecule type" value="mRNA"/>
</dbReference>
<dbReference type="EMBL" id="BT030055">
    <property type="protein sequence ID" value="ABN04793.1"/>
    <property type="molecule type" value="mRNA"/>
</dbReference>
<dbReference type="EMBL" id="BT021999">
    <property type="protein sequence ID" value="AAY25411.1"/>
    <property type="status" value="ALT_INIT"/>
    <property type="molecule type" value="mRNA"/>
</dbReference>
<dbReference type="PIR" id="T05559">
    <property type="entry name" value="T05559"/>
</dbReference>
<dbReference type="RefSeq" id="NP_194206.2">
    <property type="nucleotide sequence ID" value="NM_118608.5"/>
</dbReference>
<dbReference type="SMR" id="Q0WWT7"/>
<dbReference type="BioGRID" id="13866">
    <property type="interactions" value="3"/>
</dbReference>
<dbReference type="FunCoup" id="Q0WWT7">
    <property type="interactions" value="1167"/>
</dbReference>
<dbReference type="STRING" id="3702.Q0WWT7"/>
<dbReference type="PaxDb" id="3702-AT4G24750.1"/>
<dbReference type="ProteomicsDB" id="245222"/>
<dbReference type="EnsemblPlants" id="AT4G24750.1">
    <property type="protein sequence ID" value="AT4G24750.1"/>
    <property type="gene ID" value="AT4G24750"/>
</dbReference>
<dbReference type="GeneID" id="828577"/>
<dbReference type="Gramene" id="AT4G24750.1">
    <property type="protein sequence ID" value="AT4G24750.1"/>
    <property type="gene ID" value="AT4G24750"/>
</dbReference>
<dbReference type="KEGG" id="ath:AT4G24750"/>
<dbReference type="Araport" id="AT4G24750"/>
<dbReference type="TAIR" id="AT4G24750"/>
<dbReference type="eggNOG" id="ENOG502QRM8">
    <property type="taxonomic scope" value="Eukaryota"/>
</dbReference>
<dbReference type="HOGENOM" id="CLU_073716_0_0_1"/>
<dbReference type="InParanoid" id="Q0WWT7"/>
<dbReference type="OMA" id="GYENLFW"/>
<dbReference type="PhylomeDB" id="Q0WWT7"/>
<dbReference type="PRO" id="PR:Q0WWT7"/>
<dbReference type="Proteomes" id="UP000006548">
    <property type="component" value="Chromosome 4"/>
</dbReference>
<dbReference type="ExpressionAtlas" id="Q0WWT7">
    <property type="expression patterns" value="baseline and differential"/>
</dbReference>
<dbReference type="GO" id="GO:0009507">
    <property type="term" value="C:chloroplast"/>
    <property type="evidence" value="ECO:0007005"/>
    <property type="project" value="TAIR"/>
</dbReference>
<dbReference type="GO" id="GO:0005829">
    <property type="term" value="C:cytosol"/>
    <property type="evidence" value="ECO:0007005"/>
    <property type="project" value="TAIR"/>
</dbReference>
<dbReference type="CDD" id="cd00158">
    <property type="entry name" value="RHOD"/>
    <property type="match status" value="1"/>
</dbReference>
<dbReference type="FunFam" id="3.40.250.10:FF:000091">
    <property type="entry name" value="Rhodanese-like domain-containing protein 11, chloroplastic"/>
    <property type="match status" value="1"/>
</dbReference>
<dbReference type="Gene3D" id="3.40.250.10">
    <property type="entry name" value="Rhodanese-like domain"/>
    <property type="match status" value="1"/>
</dbReference>
<dbReference type="InterPro" id="IPR001763">
    <property type="entry name" value="Rhodanese-like_dom"/>
</dbReference>
<dbReference type="InterPro" id="IPR036873">
    <property type="entry name" value="Rhodanese-like_dom_sf"/>
</dbReference>
<dbReference type="InterPro" id="IPR044664">
    <property type="entry name" value="STR11-like"/>
</dbReference>
<dbReference type="PANTHER" id="PTHR45187">
    <property type="entry name" value="RHODANESE-LIKE DOMAIN-CONTAINING PROTEIN 11, CHLOROPLASTIC"/>
    <property type="match status" value="1"/>
</dbReference>
<dbReference type="PANTHER" id="PTHR45187:SF2">
    <property type="entry name" value="RHODANESE-LIKE DOMAIN-CONTAINING PROTEIN 11, CHLOROPLASTIC"/>
    <property type="match status" value="1"/>
</dbReference>
<dbReference type="Pfam" id="PF00581">
    <property type="entry name" value="Rhodanese"/>
    <property type="match status" value="1"/>
</dbReference>
<dbReference type="SMART" id="SM00450">
    <property type="entry name" value="RHOD"/>
    <property type="match status" value="1"/>
</dbReference>
<dbReference type="SUPFAM" id="SSF52821">
    <property type="entry name" value="Rhodanese/Cell cycle control phosphatase"/>
    <property type="match status" value="1"/>
</dbReference>
<dbReference type="PROSITE" id="PS50206">
    <property type="entry name" value="RHODANESE_3"/>
    <property type="match status" value="1"/>
</dbReference>
<sequence length="292" mass="32114">MESLSLPVLNPLLASGSNLFRNQHSRMTSSMVSSLKSPIGGTSLSTVRRFGVGVVRMQAVDEDIDLKQMRDIAAAKKRWDGLLREGKVKLLTPREAGYAISLSNKPLLDVRPSSERNKAWIKGSTWVPIFDNDDNLDAGTLSKKVTSFAMGGWWSGAPTLSFNRLFLSKVEEKFPKDSELIVACQKGLRSLAACELLYNAGYENLFWVQGGLESAQDEDLVTEGVQPLKLAGIGGFSEFLGWTDQQRAQAAKEGWGYRLVYTARLFGVVLAADALFVGAQQLGHYIQELRGH</sequence>
<organism>
    <name type="scientific">Arabidopsis thaliana</name>
    <name type="common">Mouse-ear cress</name>
    <dbReference type="NCBI Taxonomy" id="3702"/>
    <lineage>
        <taxon>Eukaryota</taxon>
        <taxon>Viridiplantae</taxon>
        <taxon>Streptophyta</taxon>
        <taxon>Embryophyta</taxon>
        <taxon>Tracheophyta</taxon>
        <taxon>Spermatophyta</taxon>
        <taxon>Magnoliopsida</taxon>
        <taxon>eudicotyledons</taxon>
        <taxon>Gunneridae</taxon>
        <taxon>Pentapetalae</taxon>
        <taxon>rosids</taxon>
        <taxon>malvids</taxon>
        <taxon>Brassicales</taxon>
        <taxon>Brassicaceae</taxon>
        <taxon>Camelineae</taxon>
        <taxon>Arabidopsis</taxon>
    </lineage>
</organism>